<accession>A4JIR7</accession>
<keyword id="KW-0028">Amino-acid biosynthesis</keyword>
<keyword id="KW-0055">Arginine biosynthesis</keyword>
<keyword id="KW-0067">ATP-binding</keyword>
<keyword id="KW-0963">Cytoplasm</keyword>
<keyword id="KW-0418">Kinase</keyword>
<keyword id="KW-0547">Nucleotide-binding</keyword>
<keyword id="KW-0808">Transferase</keyword>
<protein>
    <recommendedName>
        <fullName evidence="1">Acetylglutamate kinase</fullName>
        <ecNumber evidence="1">2.7.2.8</ecNumber>
    </recommendedName>
    <alternativeName>
        <fullName evidence="1">N-acetyl-L-glutamate 5-phosphotransferase</fullName>
    </alternativeName>
    <alternativeName>
        <fullName evidence="1">NAG kinase</fullName>
        <shortName evidence="1">NAGK</shortName>
    </alternativeName>
</protein>
<gene>
    <name evidence="1" type="primary">argB</name>
    <name type="ordered locus">Bcep1808_3179</name>
</gene>
<proteinExistence type="inferred from homology"/>
<name>ARGB_BURVG</name>
<organism>
    <name type="scientific">Burkholderia vietnamiensis (strain G4 / LMG 22486)</name>
    <name type="common">Burkholderia cepacia (strain R1808)</name>
    <dbReference type="NCBI Taxonomy" id="269482"/>
    <lineage>
        <taxon>Bacteria</taxon>
        <taxon>Pseudomonadati</taxon>
        <taxon>Pseudomonadota</taxon>
        <taxon>Betaproteobacteria</taxon>
        <taxon>Burkholderiales</taxon>
        <taxon>Burkholderiaceae</taxon>
        <taxon>Burkholderia</taxon>
        <taxon>Burkholderia cepacia complex</taxon>
    </lineage>
</organism>
<comment type="function">
    <text evidence="1">Catalyzes the ATP-dependent phosphorylation of N-acetyl-L-glutamate.</text>
</comment>
<comment type="catalytic activity">
    <reaction evidence="1">
        <text>N-acetyl-L-glutamate + ATP = N-acetyl-L-glutamyl 5-phosphate + ADP</text>
        <dbReference type="Rhea" id="RHEA:14629"/>
        <dbReference type="ChEBI" id="CHEBI:30616"/>
        <dbReference type="ChEBI" id="CHEBI:44337"/>
        <dbReference type="ChEBI" id="CHEBI:57936"/>
        <dbReference type="ChEBI" id="CHEBI:456216"/>
        <dbReference type="EC" id="2.7.2.8"/>
    </reaction>
</comment>
<comment type="pathway">
    <text evidence="1">Amino-acid biosynthesis; L-arginine biosynthesis; N(2)-acetyl-L-ornithine from L-glutamate: step 2/4.</text>
</comment>
<comment type="subcellular location">
    <subcellularLocation>
        <location evidence="1">Cytoplasm</location>
    </subcellularLocation>
</comment>
<comment type="similarity">
    <text evidence="1">Belongs to the acetylglutamate kinase family. ArgB subfamily.</text>
</comment>
<reference key="1">
    <citation type="submission" date="2007-03" db="EMBL/GenBank/DDBJ databases">
        <title>Complete sequence of chromosome 1 of Burkholderia vietnamiensis G4.</title>
        <authorList>
            <consortium name="US DOE Joint Genome Institute"/>
            <person name="Copeland A."/>
            <person name="Lucas S."/>
            <person name="Lapidus A."/>
            <person name="Barry K."/>
            <person name="Detter J.C."/>
            <person name="Glavina del Rio T."/>
            <person name="Hammon N."/>
            <person name="Israni S."/>
            <person name="Dalin E."/>
            <person name="Tice H."/>
            <person name="Pitluck S."/>
            <person name="Chain P."/>
            <person name="Malfatti S."/>
            <person name="Shin M."/>
            <person name="Vergez L."/>
            <person name="Schmutz J."/>
            <person name="Larimer F."/>
            <person name="Land M."/>
            <person name="Hauser L."/>
            <person name="Kyrpides N."/>
            <person name="Tiedje J."/>
            <person name="Richardson P."/>
        </authorList>
    </citation>
    <scope>NUCLEOTIDE SEQUENCE [LARGE SCALE GENOMIC DNA]</scope>
    <source>
        <strain>G4 / LMG 22486</strain>
    </source>
</reference>
<feature type="chain" id="PRO_1000010491" description="Acetylglutamate kinase">
    <location>
        <begin position="1"/>
        <end position="299"/>
    </location>
</feature>
<feature type="binding site" evidence="1">
    <location>
        <begin position="72"/>
        <end position="73"/>
    </location>
    <ligand>
        <name>substrate</name>
    </ligand>
</feature>
<feature type="binding site" evidence="1">
    <location>
        <position position="94"/>
    </location>
    <ligand>
        <name>substrate</name>
    </ligand>
</feature>
<feature type="binding site" evidence="1">
    <location>
        <position position="196"/>
    </location>
    <ligand>
        <name>substrate</name>
    </ligand>
</feature>
<feature type="site" description="Transition state stabilizer" evidence="1">
    <location>
        <position position="37"/>
    </location>
</feature>
<feature type="site" description="Transition state stabilizer" evidence="1">
    <location>
        <position position="256"/>
    </location>
</feature>
<dbReference type="EC" id="2.7.2.8" evidence="1"/>
<dbReference type="EMBL" id="CP000614">
    <property type="protein sequence ID" value="ABO56170.1"/>
    <property type="molecule type" value="Genomic_DNA"/>
</dbReference>
<dbReference type="SMR" id="A4JIR7"/>
<dbReference type="KEGG" id="bvi:Bcep1808_3179"/>
<dbReference type="eggNOG" id="COG0548">
    <property type="taxonomic scope" value="Bacteria"/>
</dbReference>
<dbReference type="HOGENOM" id="CLU_053680_0_0_4"/>
<dbReference type="UniPathway" id="UPA00068">
    <property type="reaction ID" value="UER00107"/>
</dbReference>
<dbReference type="Proteomes" id="UP000002287">
    <property type="component" value="Chromosome 1"/>
</dbReference>
<dbReference type="GO" id="GO:0005737">
    <property type="term" value="C:cytoplasm"/>
    <property type="evidence" value="ECO:0007669"/>
    <property type="project" value="UniProtKB-SubCell"/>
</dbReference>
<dbReference type="GO" id="GO:0003991">
    <property type="term" value="F:acetylglutamate kinase activity"/>
    <property type="evidence" value="ECO:0007669"/>
    <property type="project" value="UniProtKB-UniRule"/>
</dbReference>
<dbReference type="GO" id="GO:0005524">
    <property type="term" value="F:ATP binding"/>
    <property type="evidence" value="ECO:0007669"/>
    <property type="project" value="UniProtKB-UniRule"/>
</dbReference>
<dbReference type="GO" id="GO:0042450">
    <property type="term" value="P:arginine biosynthetic process via ornithine"/>
    <property type="evidence" value="ECO:0007669"/>
    <property type="project" value="UniProtKB-UniRule"/>
</dbReference>
<dbReference type="GO" id="GO:0006526">
    <property type="term" value="P:L-arginine biosynthetic process"/>
    <property type="evidence" value="ECO:0007669"/>
    <property type="project" value="UniProtKB-UniPathway"/>
</dbReference>
<dbReference type="CDD" id="cd04250">
    <property type="entry name" value="AAK_NAGK-C"/>
    <property type="match status" value="1"/>
</dbReference>
<dbReference type="FunFam" id="3.40.1160.10:FF:000004">
    <property type="entry name" value="Acetylglutamate kinase"/>
    <property type="match status" value="1"/>
</dbReference>
<dbReference type="Gene3D" id="3.40.1160.10">
    <property type="entry name" value="Acetylglutamate kinase-like"/>
    <property type="match status" value="1"/>
</dbReference>
<dbReference type="HAMAP" id="MF_00082">
    <property type="entry name" value="ArgB"/>
    <property type="match status" value="1"/>
</dbReference>
<dbReference type="InterPro" id="IPR036393">
    <property type="entry name" value="AceGlu_kinase-like_sf"/>
</dbReference>
<dbReference type="InterPro" id="IPR004662">
    <property type="entry name" value="AcgluKinase_fam"/>
</dbReference>
<dbReference type="InterPro" id="IPR037528">
    <property type="entry name" value="ArgB"/>
</dbReference>
<dbReference type="InterPro" id="IPR001048">
    <property type="entry name" value="Asp/Glu/Uridylate_kinase"/>
</dbReference>
<dbReference type="InterPro" id="IPR041727">
    <property type="entry name" value="NAGK-C"/>
</dbReference>
<dbReference type="NCBIfam" id="TIGR00761">
    <property type="entry name" value="argB"/>
    <property type="match status" value="1"/>
</dbReference>
<dbReference type="PANTHER" id="PTHR23342">
    <property type="entry name" value="N-ACETYLGLUTAMATE SYNTHASE"/>
    <property type="match status" value="1"/>
</dbReference>
<dbReference type="PANTHER" id="PTHR23342:SF0">
    <property type="entry name" value="N-ACETYLGLUTAMATE SYNTHASE, MITOCHONDRIAL"/>
    <property type="match status" value="1"/>
</dbReference>
<dbReference type="Pfam" id="PF00696">
    <property type="entry name" value="AA_kinase"/>
    <property type="match status" value="1"/>
</dbReference>
<dbReference type="PIRSF" id="PIRSF000728">
    <property type="entry name" value="NAGK"/>
    <property type="match status" value="1"/>
</dbReference>
<dbReference type="SUPFAM" id="SSF53633">
    <property type="entry name" value="Carbamate kinase-like"/>
    <property type="match status" value="1"/>
</dbReference>
<evidence type="ECO:0000255" key="1">
    <source>
        <dbReference type="HAMAP-Rule" id="MF_00082"/>
    </source>
</evidence>
<sequence>MSEPIDLSQIAPTLKAEILAEALPYIRRYHGKTVVIKYGGNAMTEERLKQGFARDVILLKLVGINPVIVHGGGPQIDHALKKIGKAGTFIQGMRVTDEETMEVVEWVLGGEVQQDIVMLINHFGGHAVGLTGKDGGLIHARKLLMPDRDNPGQYIDIGQVGEVEAINPAVVKALQDDAFIPVISPIGFGEDGLSYNINADLVAGKLATVLNAEKLLMMTNIPGVMDKDGNLLTDLSAREIDALFEDGTISGGMLPKISSALDAAKSGVKSVHIVDGRIEHSVLLEILTDQPFGTMIRSH</sequence>